<name>PSA_MYCTF</name>
<evidence type="ECO:0000255" key="1">
    <source>
        <dbReference type="HAMAP-Rule" id="MF_00289"/>
    </source>
</evidence>
<sequence>MSFPYFISPEQAMRERSELARKGIARAKSVVALAYAGGVLFVAENPSRSLQKISELYDRVGFAAAGKFNEFDNLRRGGIQFADTRGYAYDRRDVTGRQLANVYAQTLGTIFTEQAKPYEVELCVAEVAHYGETKRPELYRITYDGSIADEPHFVVMGGTTEPIANALKESYAENASLTDALRIAVAALRAGSADTSGGDQPTLGVASLEVAVLDANRPRRAFRRITGSALQALLVDQESPQSDGESSG</sequence>
<proteinExistence type="inferred from homology"/>
<organism>
    <name type="scientific">Mycobacterium tuberculosis (strain F11)</name>
    <dbReference type="NCBI Taxonomy" id="336982"/>
    <lineage>
        <taxon>Bacteria</taxon>
        <taxon>Bacillati</taxon>
        <taxon>Actinomycetota</taxon>
        <taxon>Actinomycetes</taxon>
        <taxon>Mycobacteriales</taxon>
        <taxon>Mycobacteriaceae</taxon>
        <taxon>Mycobacterium</taxon>
        <taxon>Mycobacterium tuberculosis complex</taxon>
    </lineage>
</organism>
<keyword id="KW-0963">Cytoplasm</keyword>
<keyword id="KW-0647">Proteasome</keyword>
<gene>
    <name evidence="1" type="primary">prcA</name>
    <name type="ordered locus">TBFG_12141</name>
</gene>
<comment type="function">
    <text evidence="1">Component of the proteasome core, a large protease complex with broad specificity involved in protein degradation.</text>
</comment>
<comment type="activity regulation">
    <text evidence="1">The formation of the proteasomal ATPase ARC-20S proteasome complex, likely via the docking of the C-termini of ARC into the intersubunit pockets in the alpha-rings, may trigger opening of the gate for substrate entry. Interconversion between the open-gate and close-gate conformations leads to a dynamic regulation of the 20S proteasome proteolysis activity.</text>
</comment>
<comment type="pathway">
    <text evidence="1">Protein degradation; proteasomal Pup-dependent pathway.</text>
</comment>
<comment type="subunit">
    <text evidence="1">The 20S proteasome core is composed of 14 alpha and 14 beta subunits that assemble into four stacked heptameric rings, resulting in a barrel-shaped structure. The two inner rings, each composed of seven catalytic beta subunits, are sandwiched by two outer rings, each composed of seven alpha subunits. The catalytic chamber with the active sites is on the inside of the barrel. Has a gated structure, the ends of the cylinder being occluded by the N-termini of the alpha-subunits. Is capped by the proteasome-associated ATPase, ARC.</text>
</comment>
<comment type="subcellular location">
    <subcellularLocation>
        <location evidence="1">Cytoplasm</location>
    </subcellularLocation>
</comment>
<comment type="similarity">
    <text evidence="1">Belongs to the peptidase T1A family.</text>
</comment>
<protein>
    <recommendedName>
        <fullName evidence="1">Proteasome subunit alpha</fullName>
    </recommendedName>
    <alternativeName>
        <fullName evidence="1">20S proteasome alpha subunit</fullName>
    </alternativeName>
    <alternativeName>
        <fullName evidence="1">Proteasome core protein PrcA</fullName>
    </alternativeName>
</protein>
<reference key="1">
    <citation type="submission" date="2007-04" db="EMBL/GenBank/DDBJ databases">
        <title>The complete genome sequence of Mycobacterium tuberculosis F11.</title>
        <authorList>
            <person name="Birren B."/>
            <person name="Lander E."/>
            <person name="Galagan J."/>
            <person name="Devon K."/>
            <person name="Nusbaum C."/>
            <person name="Borowsky M.L."/>
            <person name="Grabherr M."/>
            <person name="Mauceli E."/>
            <person name="Brockman W."/>
            <person name="Young S."/>
            <person name="LaButti K."/>
            <person name="Pushparaj V."/>
            <person name="Sykes S."/>
            <person name="Baldwin J."/>
            <person name="Fitzgerald M."/>
            <person name="Bloom T."/>
            <person name="Zimmer A."/>
            <person name="Settipalli S."/>
            <person name="Shea T."/>
            <person name="Arachchi H."/>
            <person name="Macdonald P."/>
            <person name="Abouelleil A."/>
            <person name="Lui A."/>
            <person name="Priest M."/>
            <person name="Berlin A."/>
            <person name="Gearin G."/>
            <person name="Brown A."/>
            <person name="Aftuck L."/>
            <person name="Bessette D."/>
            <person name="Allen N."/>
            <person name="Lubonja R."/>
            <person name="Lokyitsang T."/>
            <person name="Matthews C."/>
            <person name="Dunbar C."/>
            <person name="Benamara M."/>
            <person name="Nguyen T."/>
            <person name="Negash T."/>
            <person name="DeCaprio D."/>
            <person name="Crawford M."/>
            <person name="Koehrsen M."/>
            <person name="Engels R."/>
            <person name="Montgomery P."/>
            <person name="Pearson M."/>
            <person name="Howarth C."/>
            <person name="Kodira C."/>
            <person name="Zeng Q."/>
            <person name="Yandava C."/>
            <person name="O'Leary S."/>
            <person name="Alvarado L."/>
            <person name="Victor T."/>
            <person name="Murray M."/>
        </authorList>
    </citation>
    <scope>NUCLEOTIDE SEQUENCE [LARGE SCALE GENOMIC DNA]</scope>
    <source>
        <strain>F11</strain>
    </source>
</reference>
<feature type="chain" id="PRO_0000397159" description="Proteasome subunit alpha">
    <location>
        <begin position="1"/>
        <end position="248"/>
    </location>
</feature>
<accession>A5WP83</accession>
<dbReference type="EMBL" id="CP000717">
    <property type="protein sequence ID" value="ABR06472.1"/>
    <property type="molecule type" value="Genomic_DNA"/>
</dbReference>
<dbReference type="RefSeq" id="WP_003906749.1">
    <property type="nucleotide sequence ID" value="NZ_KK339377.1"/>
</dbReference>
<dbReference type="SMR" id="A5WP83"/>
<dbReference type="KEGG" id="mtf:TBFG_12141"/>
<dbReference type="PATRIC" id="fig|336982.11.peg.2350"/>
<dbReference type="HOGENOM" id="CLU_071031_0_0_11"/>
<dbReference type="UniPathway" id="UPA00997"/>
<dbReference type="GO" id="GO:0005737">
    <property type="term" value="C:cytoplasm"/>
    <property type="evidence" value="ECO:0007669"/>
    <property type="project" value="UniProtKB-SubCell"/>
</dbReference>
<dbReference type="GO" id="GO:0019773">
    <property type="term" value="C:proteasome core complex, alpha-subunit complex"/>
    <property type="evidence" value="ECO:0007669"/>
    <property type="project" value="UniProtKB-UniRule"/>
</dbReference>
<dbReference type="GO" id="GO:0004298">
    <property type="term" value="F:threonine-type endopeptidase activity"/>
    <property type="evidence" value="ECO:0007669"/>
    <property type="project" value="InterPro"/>
</dbReference>
<dbReference type="GO" id="GO:0019941">
    <property type="term" value="P:modification-dependent protein catabolic process"/>
    <property type="evidence" value="ECO:0007669"/>
    <property type="project" value="UniProtKB-UniRule"/>
</dbReference>
<dbReference type="GO" id="GO:0010498">
    <property type="term" value="P:proteasomal protein catabolic process"/>
    <property type="evidence" value="ECO:0007669"/>
    <property type="project" value="UniProtKB-UniRule"/>
</dbReference>
<dbReference type="CDD" id="cd01906">
    <property type="entry name" value="proteasome_protease_HslV"/>
    <property type="match status" value="1"/>
</dbReference>
<dbReference type="FunFam" id="3.60.20.10:FF:000023">
    <property type="entry name" value="Proteasome subunit alpha"/>
    <property type="match status" value="1"/>
</dbReference>
<dbReference type="Gene3D" id="3.60.20.10">
    <property type="entry name" value="Glutamine Phosphoribosylpyrophosphate, subunit 1, domain 1"/>
    <property type="match status" value="1"/>
</dbReference>
<dbReference type="HAMAP" id="MF_00289_B">
    <property type="entry name" value="Proteasome_A_B"/>
    <property type="match status" value="1"/>
</dbReference>
<dbReference type="InterPro" id="IPR029055">
    <property type="entry name" value="Ntn_hydrolases_N"/>
</dbReference>
<dbReference type="InterPro" id="IPR050115">
    <property type="entry name" value="Proteasome_alpha"/>
</dbReference>
<dbReference type="InterPro" id="IPR023332">
    <property type="entry name" value="Proteasome_alpha-type"/>
</dbReference>
<dbReference type="InterPro" id="IPR022296">
    <property type="entry name" value="Proteasome_asu_bac"/>
</dbReference>
<dbReference type="InterPro" id="IPR001353">
    <property type="entry name" value="Proteasome_sua/b"/>
</dbReference>
<dbReference type="NCBIfam" id="TIGR03691">
    <property type="entry name" value="20S_bact_alpha"/>
    <property type="match status" value="1"/>
</dbReference>
<dbReference type="PANTHER" id="PTHR11599">
    <property type="entry name" value="PROTEASOME SUBUNIT ALPHA/BETA"/>
    <property type="match status" value="1"/>
</dbReference>
<dbReference type="Pfam" id="PF00227">
    <property type="entry name" value="Proteasome"/>
    <property type="match status" value="1"/>
</dbReference>
<dbReference type="SUPFAM" id="SSF56235">
    <property type="entry name" value="N-terminal nucleophile aminohydrolases (Ntn hydrolases)"/>
    <property type="match status" value="1"/>
</dbReference>
<dbReference type="PROSITE" id="PS51475">
    <property type="entry name" value="PROTEASOME_ALPHA_2"/>
    <property type="match status" value="1"/>
</dbReference>